<accession>C6BZY6</accession>
<keyword id="KW-0012">Acyltransferase</keyword>
<keyword id="KW-0963">Cytoplasm</keyword>
<keyword id="KW-1185">Reference proteome</keyword>
<keyword id="KW-0808">Transferase</keyword>
<comment type="function">
    <text evidence="1">Catalyzes the transfer of endogenously produced octanoic acid from octanoyl-acyl-carrier-protein onto the lipoyl domains of lipoate-dependent enzymes. Lipoyl-ACP can also act as a substrate although octanoyl-ACP is likely to be the physiological substrate.</text>
</comment>
<comment type="catalytic activity">
    <reaction evidence="1">
        <text>octanoyl-[ACP] + L-lysyl-[protein] = N(6)-octanoyl-L-lysyl-[protein] + holo-[ACP] + H(+)</text>
        <dbReference type="Rhea" id="RHEA:17665"/>
        <dbReference type="Rhea" id="RHEA-COMP:9636"/>
        <dbReference type="Rhea" id="RHEA-COMP:9685"/>
        <dbReference type="Rhea" id="RHEA-COMP:9752"/>
        <dbReference type="Rhea" id="RHEA-COMP:9928"/>
        <dbReference type="ChEBI" id="CHEBI:15378"/>
        <dbReference type="ChEBI" id="CHEBI:29969"/>
        <dbReference type="ChEBI" id="CHEBI:64479"/>
        <dbReference type="ChEBI" id="CHEBI:78463"/>
        <dbReference type="ChEBI" id="CHEBI:78809"/>
        <dbReference type="EC" id="2.3.1.181"/>
    </reaction>
</comment>
<comment type="pathway">
    <text evidence="1">Protein modification; protein lipoylation via endogenous pathway; protein N(6)-(lipoyl)lysine from octanoyl-[acyl-carrier-protein]: step 1/2.</text>
</comment>
<comment type="subcellular location">
    <subcellularLocation>
        <location evidence="1">Cytoplasm</location>
    </subcellularLocation>
</comment>
<comment type="miscellaneous">
    <text evidence="1">In the reaction, the free carboxyl group of octanoic acid is attached via an amide linkage to the epsilon-amino group of a specific lysine residue of lipoyl domains of lipoate-dependent enzymes.</text>
</comment>
<comment type="similarity">
    <text evidence="1">Belongs to the LipB family.</text>
</comment>
<sequence length="214" mass="23464">MEFIDLGLIPHGEAERIQLERLKQVMEGTAEDALYLLEHPPVVTLGRQGGLENLLISEEALKAMGAEVVQTARGGNITCHYPGQMVVYPVMRIEKRRGGIKKFFFDMEETAIRTAARFGVQAARSEGRPGVWVGPGKLCSIGIGVKKWITYHGLSFNVSSDMKLFDAITLCGLHGAHPTSLSREAGKEISTEEVKNVFREEFGKVFTDTAVAAS</sequence>
<dbReference type="EC" id="2.3.1.181" evidence="1"/>
<dbReference type="EMBL" id="CP001649">
    <property type="protein sequence ID" value="ACS80857.1"/>
    <property type="molecule type" value="Genomic_DNA"/>
</dbReference>
<dbReference type="RefSeq" id="WP_015852673.1">
    <property type="nucleotide sequence ID" value="NC_012881.1"/>
</dbReference>
<dbReference type="SMR" id="C6BZY6"/>
<dbReference type="STRING" id="526222.Desal_2805"/>
<dbReference type="KEGG" id="dsa:Desal_2805"/>
<dbReference type="eggNOG" id="COG0321">
    <property type="taxonomic scope" value="Bacteria"/>
</dbReference>
<dbReference type="HOGENOM" id="CLU_035168_1_3_7"/>
<dbReference type="OrthoDB" id="9787061at2"/>
<dbReference type="UniPathway" id="UPA00538">
    <property type="reaction ID" value="UER00592"/>
</dbReference>
<dbReference type="Proteomes" id="UP000002601">
    <property type="component" value="Chromosome"/>
</dbReference>
<dbReference type="GO" id="GO:0005737">
    <property type="term" value="C:cytoplasm"/>
    <property type="evidence" value="ECO:0007669"/>
    <property type="project" value="UniProtKB-SubCell"/>
</dbReference>
<dbReference type="GO" id="GO:0033819">
    <property type="term" value="F:lipoyl(octanoyl) transferase activity"/>
    <property type="evidence" value="ECO:0007669"/>
    <property type="project" value="UniProtKB-EC"/>
</dbReference>
<dbReference type="GO" id="GO:0036211">
    <property type="term" value="P:protein modification process"/>
    <property type="evidence" value="ECO:0007669"/>
    <property type="project" value="InterPro"/>
</dbReference>
<dbReference type="CDD" id="cd16444">
    <property type="entry name" value="LipB"/>
    <property type="match status" value="1"/>
</dbReference>
<dbReference type="Gene3D" id="3.30.930.10">
    <property type="entry name" value="Bira Bifunctional Protein, Domain 2"/>
    <property type="match status" value="1"/>
</dbReference>
<dbReference type="HAMAP" id="MF_00013">
    <property type="entry name" value="LipB"/>
    <property type="match status" value="1"/>
</dbReference>
<dbReference type="InterPro" id="IPR045864">
    <property type="entry name" value="aa-tRNA-synth_II/BPL/LPL"/>
</dbReference>
<dbReference type="InterPro" id="IPR004143">
    <property type="entry name" value="BPL_LPL_catalytic"/>
</dbReference>
<dbReference type="InterPro" id="IPR000544">
    <property type="entry name" value="Octanoyltransferase"/>
</dbReference>
<dbReference type="InterPro" id="IPR020605">
    <property type="entry name" value="Octanoyltransferase_CS"/>
</dbReference>
<dbReference type="NCBIfam" id="TIGR00214">
    <property type="entry name" value="lipB"/>
    <property type="match status" value="1"/>
</dbReference>
<dbReference type="PANTHER" id="PTHR10993:SF7">
    <property type="entry name" value="LIPOYLTRANSFERASE 2, MITOCHONDRIAL-RELATED"/>
    <property type="match status" value="1"/>
</dbReference>
<dbReference type="PANTHER" id="PTHR10993">
    <property type="entry name" value="OCTANOYLTRANSFERASE"/>
    <property type="match status" value="1"/>
</dbReference>
<dbReference type="Pfam" id="PF21948">
    <property type="entry name" value="LplA-B_cat"/>
    <property type="match status" value="1"/>
</dbReference>
<dbReference type="PIRSF" id="PIRSF016262">
    <property type="entry name" value="LPLase"/>
    <property type="match status" value="1"/>
</dbReference>
<dbReference type="SUPFAM" id="SSF55681">
    <property type="entry name" value="Class II aaRS and biotin synthetases"/>
    <property type="match status" value="1"/>
</dbReference>
<dbReference type="PROSITE" id="PS51733">
    <property type="entry name" value="BPL_LPL_CATALYTIC"/>
    <property type="match status" value="1"/>
</dbReference>
<dbReference type="PROSITE" id="PS01313">
    <property type="entry name" value="LIPB"/>
    <property type="match status" value="1"/>
</dbReference>
<evidence type="ECO:0000255" key="1">
    <source>
        <dbReference type="HAMAP-Rule" id="MF_00013"/>
    </source>
</evidence>
<evidence type="ECO:0000255" key="2">
    <source>
        <dbReference type="PROSITE-ProRule" id="PRU01067"/>
    </source>
</evidence>
<name>LIPB_MARSD</name>
<gene>
    <name evidence="1" type="primary">lipB</name>
    <name type="ordered locus">Desal_2805</name>
</gene>
<reference key="1">
    <citation type="submission" date="2009-06" db="EMBL/GenBank/DDBJ databases">
        <title>Complete sequence of Desulfovibrio salexigens DSM 2638.</title>
        <authorList>
            <consortium name="US DOE Joint Genome Institute"/>
            <person name="Lucas S."/>
            <person name="Copeland A."/>
            <person name="Lapidus A."/>
            <person name="Glavina del Rio T."/>
            <person name="Tice H."/>
            <person name="Bruce D."/>
            <person name="Goodwin L."/>
            <person name="Pitluck S."/>
            <person name="Munk A.C."/>
            <person name="Brettin T."/>
            <person name="Detter J.C."/>
            <person name="Han C."/>
            <person name="Tapia R."/>
            <person name="Larimer F."/>
            <person name="Land M."/>
            <person name="Hauser L."/>
            <person name="Kyrpides N."/>
            <person name="Anderson I."/>
            <person name="Wall J.D."/>
            <person name="Arkin A.P."/>
            <person name="Dehal P."/>
            <person name="Chivian D."/>
            <person name="Giles B."/>
            <person name="Hazen T.C."/>
        </authorList>
    </citation>
    <scope>NUCLEOTIDE SEQUENCE [LARGE SCALE GENOMIC DNA]</scope>
    <source>
        <strain>ATCC 14822 / DSM 2638 / NCIMB 8403 / VKM B-1763</strain>
    </source>
</reference>
<feature type="chain" id="PRO_1000201792" description="Octanoyltransferase">
    <location>
        <begin position="1"/>
        <end position="214"/>
    </location>
</feature>
<feature type="domain" description="BPL/LPL catalytic" evidence="2">
    <location>
        <begin position="28"/>
        <end position="210"/>
    </location>
</feature>
<feature type="active site" description="Acyl-thioester intermediate" evidence="1">
    <location>
        <position position="171"/>
    </location>
</feature>
<feature type="binding site" evidence="1">
    <location>
        <begin position="73"/>
        <end position="80"/>
    </location>
    <ligand>
        <name>substrate</name>
    </ligand>
</feature>
<feature type="binding site" evidence="1">
    <location>
        <begin position="140"/>
        <end position="142"/>
    </location>
    <ligand>
        <name>substrate</name>
    </ligand>
</feature>
<feature type="binding site" evidence="1">
    <location>
        <begin position="153"/>
        <end position="155"/>
    </location>
    <ligand>
        <name>substrate</name>
    </ligand>
</feature>
<feature type="site" description="Lowers pKa of active site Cys" evidence="1">
    <location>
        <position position="137"/>
    </location>
</feature>
<protein>
    <recommendedName>
        <fullName evidence="1">Octanoyltransferase</fullName>
        <ecNumber evidence="1">2.3.1.181</ecNumber>
    </recommendedName>
    <alternativeName>
        <fullName evidence="1">Lipoate-protein ligase B</fullName>
    </alternativeName>
    <alternativeName>
        <fullName evidence="1">Lipoyl/octanoyl transferase</fullName>
    </alternativeName>
    <alternativeName>
        <fullName evidence="1">Octanoyl-[acyl-carrier-protein]-protein N-octanoyltransferase</fullName>
    </alternativeName>
</protein>
<proteinExistence type="inferred from homology"/>
<organism>
    <name type="scientific">Maridesulfovibrio salexigens (strain ATCC 14822 / DSM 2638 / NCIMB 8403 / VKM B-1763)</name>
    <name type="common">Desulfovibrio salexigens</name>
    <dbReference type="NCBI Taxonomy" id="526222"/>
    <lineage>
        <taxon>Bacteria</taxon>
        <taxon>Pseudomonadati</taxon>
        <taxon>Thermodesulfobacteriota</taxon>
        <taxon>Desulfovibrionia</taxon>
        <taxon>Desulfovibrionales</taxon>
        <taxon>Desulfovibrionaceae</taxon>
        <taxon>Maridesulfovibrio</taxon>
    </lineage>
</organism>